<accession>B0UUJ3</accession>
<evidence type="ECO:0000255" key="1">
    <source>
        <dbReference type="HAMAP-Rule" id="MF_00595"/>
    </source>
</evidence>
<reference key="1">
    <citation type="submission" date="2008-02" db="EMBL/GenBank/DDBJ databases">
        <title>Complete sequence of Haemophilus somnus 2336.</title>
        <authorList>
            <consortium name="US DOE Joint Genome Institute"/>
            <person name="Siddaramappa S."/>
            <person name="Duncan A.J."/>
            <person name="Challacombe J.F."/>
            <person name="Rainey D."/>
            <person name="Gillaspy A.F."/>
            <person name="Carson M."/>
            <person name="Gipson J."/>
            <person name="Gipson M."/>
            <person name="Bruce D."/>
            <person name="Detter J.C."/>
            <person name="Han C.S."/>
            <person name="Land M."/>
            <person name="Tapia R."/>
            <person name="Thompson L.S."/>
            <person name="Orvis J."/>
            <person name="Zaitshik J."/>
            <person name="Barnes G."/>
            <person name="Brettin T.S."/>
            <person name="Dyer D.W."/>
            <person name="Inzana T.J."/>
        </authorList>
    </citation>
    <scope>NUCLEOTIDE SEQUENCE [LARGE SCALE GENOMIC DNA]</scope>
    <source>
        <strain>2336</strain>
    </source>
</reference>
<feature type="chain" id="PRO_1000082427" description="Phosphoenolpyruvate carboxylase">
    <location>
        <begin position="1"/>
        <end position="879"/>
    </location>
</feature>
<feature type="active site" evidence="1">
    <location>
        <position position="138"/>
    </location>
</feature>
<feature type="active site" evidence="1">
    <location>
        <position position="545"/>
    </location>
</feature>
<proteinExistence type="inferred from homology"/>
<dbReference type="EC" id="4.1.1.31" evidence="1"/>
<dbReference type="EMBL" id="CP000947">
    <property type="protein sequence ID" value="ACA31221.1"/>
    <property type="molecule type" value="Genomic_DNA"/>
</dbReference>
<dbReference type="RefSeq" id="WP_012340613.1">
    <property type="nucleotide sequence ID" value="NC_010519.1"/>
</dbReference>
<dbReference type="SMR" id="B0UUJ3"/>
<dbReference type="STRING" id="228400.HSM_1472"/>
<dbReference type="GeneID" id="31487770"/>
<dbReference type="KEGG" id="hsm:HSM_1472"/>
<dbReference type="HOGENOM" id="CLU_006557_2_0_6"/>
<dbReference type="GO" id="GO:0005829">
    <property type="term" value="C:cytosol"/>
    <property type="evidence" value="ECO:0007669"/>
    <property type="project" value="TreeGrafter"/>
</dbReference>
<dbReference type="GO" id="GO:0000287">
    <property type="term" value="F:magnesium ion binding"/>
    <property type="evidence" value="ECO:0007669"/>
    <property type="project" value="UniProtKB-UniRule"/>
</dbReference>
<dbReference type="GO" id="GO:0008964">
    <property type="term" value="F:phosphoenolpyruvate carboxylase activity"/>
    <property type="evidence" value="ECO:0007669"/>
    <property type="project" value="UniProtKB-UniRule"/>
</dbReference>
<dbReference type="GO" id="GO:0015977">
    <property type="term" value="P:carbon fixation"/>
    <property type="evidence" value="ECO:0007669"/>
    <property type="project" value="UniProtKB-UniRule"/>
</dbReference>
<dbReference type="GO" id="GO:0006107">
    <property type="term" value="P:oxaloacetate metabolic process"/>
    <property type="evidence" value="ECO:0007669"/>
    <property type="project" value="UniProtKB-UniRule"/>
</dbReference>
<dbReference type="GO" id="GO:0006099">
    <property type="term" value="P:tricarboxylic acid cycle"/>
    <property type="evidence" value="ECO:0007669"/>
    <property type="project" value="InterPro"/>
</dbReference>
<dbReference type="Gene3D" id="1.20.1440.90">
    <property type="entry name" value="Phosphoenolpyruvate/pyruvate domain"/>
    <property type="match status" value="1"/>
</dbReference>
<dbReference type="HAMAP" id="MF_00595">
    <property type="entry name" value="PEPcase_type1"/>
    <property type="match status" value="1"/>
</dbReference>
<dbReference type="InterPro" id="IPR021135">
    <property type="entry name" value="PEP_COase"/>
</dbReference>
<dbReference type="InterPro" id="IPR022805">
    <property type="entry name" value="PEP_COase_bac/pln-type"/>
</dbReference>
<dbReference type="InterPro" id="IPR018129">
    <property type="entry name" value="PEP_COase_Lys_AS"/>
</dbReference>
<dbReference type="InterPro" id="IPR033129">
    <property type="entry name" value="PEPCASE_His_AS"/>
</dbReference>
<dbReference type="InterPro" id="IPR015813">
    <property type="entry name" value="Pyrv/PenolPyrv_kinase-like_dom"/>
</dbReference>
<dbReference type="NCBIfam" id="NF000584">
    <property type="entry name" value="PRK00009.1"/>
    <property type="match status" value="1"/>
</dbReference>
<dbReference type="PANTHER" id="PTHR30523">
    <property type="entry name" value="PHOSPHOENOLPYRUVATE CARBOXYLASE"/>
    <property type="match status" value="1"/>
</dbReference>
<dbReference type="PANTHER" id="PTHR30523:SF6">
    <property type="entry name" value="PHOSPHOENOLPYRUVATE CARBOXYLASE"/>
    <property type="match status" value="1"/>
</dbReference>
<dbReference type="Pfam" id="PF00311">
    <property type="entry name" value="PEPcase"/>
    <property type="match status" value="1"/>
</dbReference>
<dbReference type="PRINTS" id="PR00150">
    <property type="entry name" value="PEPCARBXLASE"/>
</dbReference>
<dbReference type="SUPFAM" id="SSF51621">
    <property type="entry name" value="Phosphoenolpyruvate/pyruvate domain"/>
    <property type="match status" value="1"/>
</dbReference>
<dbReference type="PROSITE" id="PS00781">
    <property type="entry name" value="PEPCASE_1"/>
    <property type="match status" value="1"/>
</dbReference>
<dbReference type="PROSITE" id="PS00393">
    <property type="entry name" value="PEPCASE_2"/>
    <property type="match status" value="1"/>
</dbReference>
<organism>
    <name type="scientific">Histophilus somni (strain 2336)</name>
    <name type="common">Haemophilus somnus</name>
    <dbReference type="NCBI Taxonomy" id="228400"/>
    <lineage>
        <taxon>Bacteria</taxon>
        <taxon>Pseudomonadati</taxon>
        <taxon>Pseudomonadota</taxon>
        <taxon>Gammaproteobacteria</taxon>
        <taxon>Pasteurellales</taxon>
        <taxon>Pasteurellaceae</taxon>
        <taxon>Histophilus</taxon>
    </lineage>
</organism>
<protein>
    <recommendedName>
        <fullName evidence="1">Phosphoenolpyruvate carboxylase</fullName>
        <shortName evidence="1">PEPC</shortName>
        <shortName evidence="1">PEPCase</shortName>
        <ecNumber evidence="1">4.1.1.31</ecNumber>
    </recommendedName>
</protein>
<sequence>MPQKYSTLKNNINMLGHFLGETISDAQGSDILDLIENIRVLSRDSRSGDEKAREKLLDTLSTISNENIIPVARAFSQFLNLTNIAEQYQTISRKHIDQVASDRSLEALFERLKAQNVPAEKVISTVEKLLIELVLTAHPTEVTRRSLLHKYVEINRCLSRLEHDDLTQSESTKLKRRLMQLIALAWHTNEIRTQRPTPVDEAKWGIAVIENSLWKAVPDFCRQLNLHLEKNFGVQHSVNLAPVKFSSWIGGDRDGNPFVTAETTRQVLIMNRWKAAELFLADIQVLSEELSVVHCTEEFRAKYGDHLEPYRVVVKNLRAKLVKTVAYYGEILENKPSTINTNDILTDDQQLWEPLYDCYQSLHQCGMRIIANGILLDCLRRIRCFGLSLSHLDIRQESLRHTKALSEITRYIGLGDYSQWMEDDKQAFLIRELSSRRPLLPRNWTPSPETQEILETCRVIAQQPEGVISCYIISMARTASDVLAVHLLLKEAGVTYYLPVVPLFETLDDLNASKEVMTQLFNVGWYRGVINNKQMVMIGYSDSAKDAGMMAASWAQYRAQEQLVNLCEKMGVELTLFHGRGGTIGRGGAPAHAALLSQPPRSLKNGLRVTEQGEMIRFKLGLPAVAVNSFDLYASAILEANLLPPPEPKESWRAIMNELSDSSCNIYRSVVRGDKDFVPYFRSATPEQELSKLPLGSRPSKRNPNGGVESLRAIPWIFAWMQNRLMLPAWLGASASIRQSIEKGNKETIEEMCKNWPFFSTRIGMLEMVFSKTDTWLSEHYDLNLVKKELWYLGQSLREQLQADIKTILSLSHEDELMSDLPWIAESIALRNIYTDPLNLLQVELLRRLRENPENPNPDVEQALMITITGIAAGMRNTG</sequence>
<name>CAPP_HISS2</name>
<comment type="function">
    <text evidence="1">Forms oxaloacetate, a four-carbon dicarboxylic acid source for the tricarboxylic acid cycle.</text>
</comment>
<comment type="catalytic activity">
    <reaction evidence="1">
        <text>oxaloacetate + phosphate = phosphoenolpyruvate + hydrogencarbonate</text>
        <dbReference type="Rhea" id="RHEA:28370"/>
        <dbReference type="ChEBI" id="CHEBI:16452"/>
        <dbReference type="ChEBI" id="CHEBI:17544"/>
        <dbReference type="ChEBI" id="CHEBI:43474"/>
        <dbReference type="ChEBI" id="CHEBI:58702"/>
        <dbReference type="EC" id="4.1.1.31"/>
    </reaction>
</comment>
<comment type="cofactor">
    <cofactor evidence="1">
        <name>Mg(2+)</name>
        <dbReference type="ChEBI" id="CHEBI:18420"/>
    </cofactor>
</comment>
<comment type="similarity">
    <text evidence="1">Belongs to the PEPCase type 1 family.</text>
</comment>
<gene>
    <name evidence="1" type="primary">ppc</name>
    <name type="ordered locus">HSM_1472</name>
</gene>
<keyword id="KW-0120">Carbon dioxide fixation</keyword>
<keyword id="KW-0456">Lyase</keyword>
<keyword id="KW-0460">Magnesium</keyword>